<gene>
    <name type="ORF">Tc00.1047053509233.160</name>
</gene>
<protein>
    <recommendedName>
        <fullName evidence="1">Alpha-tubulin N-acetyltransferase 2</fullName>
        <shortName evidence="1">Alpha-TAT 2</shortName>
        <shortName evidence="1">TAT 2</shortName>
        <ecNumber evidence="1">2.3.1.108</ecNumber>
    </recommendedName>
    <alternativeName>
        <fullName evidence="1">Acetyltransferase mec-17 homolog 2</fullName>
    </alternativeName>
</protein>
<comment type="function">
    <text evidence="1">Specifically acetylates 'Lys-40' in alpha-tubulin on the lumenal side of microtubules. Promotes microtubule destabilization and accelerates microtubule dynamics; this activity may be independent of acetylation activity. Acetylates alpha-tubulin with a slow enzymatic rate, due to a catalytic site that is not optimized for acetyl transfer. Enters the microtubule through each end and diffuses quickly throughout the lumen of microtubules. Acetylates only long/old microtubules because of its slow acetylation rate since it does not have time to act on dynamically unstable microtubules before the enzyme is released.</text>
</comment>
<comment type="catalytic activity">
    <reaction evidence="1">
        <text>L-lysyl-[alpha-tubulin] + acetyl-CoA = N(6)-acetyl-L-lysyl-[alpha-tubulin] + CoA + H(+)</text>
        <dbReference type="Rhea" id="RHEA:15277"/>
        <dbReference type="Rhea" id="RHEA-COMP:11278"/>
        <dbReference type="Rhea" id="RHEA-COMP:11279"/>
        <dbReference type="ChEBI" id="CHEBI:15378"/>
        <dbReference type="ChEBI" id="CHEBI:29969"/>
        <dbReference type="ChEBI" id="CHEBI:57287"/>
        <dbReference type="ChEBI" id="CHEBI:57288"/>
        <dbReference type="ChEBI" id="CHEBI:61930"/>
        <dbReference type="EC" id="2.3.1.108"/>
    </reaction>
</comment>
<comment type="similarity">
    <text evidence="1">Belongs to the acetyltransferase ATAT1 family.</text>
</comment>
<feature type="chain" id="PRO_0000402087" description="Alpha-tubulin N-acetyltransferase 2">
    <location>
        <begin position="1"/>
        <end position="328"/>
    </location>
</feature>
<feature type="domain" description="N-acetyltransferase" evidence="1">
    <location>
        <begin position="5"/>
        <end position="185"/>
    </location>
</feature>
<feature type="region of interest" description="Disordered" evidence="2">
    <location>
        <begin position="219"/>
        <end position="261"/>
    </location>
</feature>
<feature type="region of interest" description="Disordered" evidence="2">
    <location>
        <begin position="282"/>
        <end position="328"/>
    </location>
</feature>
<feature type="compositionally biased region" description="Pro residues" evidence="2">
    <location>
        <begin position="238"/>
        <end position="248"/>
    </location>
</feature>
<feature type="compositionally biased region" description="Polar residues" evidence="2">
    <location>
        <begin position="312"/>
        <end position="328"/>
    </location>
</feature>
<feature type="binding site" evidence="1">
    <location>
        <begin position="119"/>
        <end position="132"/>
    </location>
    <ligand>
        <name>acetyl-CoA</name>
        <dbReference type="ChEBI" id="CHEBI:57288"/>
    </ligand>
</feature>
<feature type="binding site" evidence="1">
    <location>
        <begin position="155"/>
        <end position="164"/>
    </location>
    <ligand>
        <name>acetyl-CoA</name>
        <dbReference type="ChEBI" id="CHEBI:57288"/>
    </ligand>
</feature>
<feature type="site" description="Crucial for catalytic activity" evidence="1">
    <location>
        <position position="58"/>
    </location>
</feature>
<accession>Q4DTX9</accession>
<dbReference type="EC" id="2.3.1.108" evidence="1"/>
<dbReference type="EMBL" id="AAHK01000179">
    <property type="protein sequence ID" value="EAN95981.1"/>
    <property type="molecule type" value="Genomic_DNA"/>
</dbReference>
<dbReference type="RefSeq" id="XP_817832.1">
    <property type="nucleotide sequence ID" value="XM_812739.1"/>
</dbReference>
<dbReference type="SMR" id="Q4DTX9"/>
<dbReference type="STRING" id="353153.Q4DTX9"/>
<dbReference type="PaxDb" id="353153-Q4DTX9"/>
<dbReference type="EnsemblProtists" id="EAN95981">
    <property type="protein sequence ID" value="EAN95981"/>
    <property type="gene ID" value="Tc00.1047053509233.160"/>
</dbReference>
<dbReference type="GeneID" id="3549909"/>
<dbReference type="KEGG" id="tcr:509233.160"/>
<dbReference type="eggNOG" id="KOG4601">
    <property type="taxonomic scope" value="Eukaryota"/>
</dbReference>
<dbReference type="InParanoid" id="Q4DTX9"/>
<dbReference type="OMA" id="ERRCNNI"/>
<dbReference type="Proteomes" id="UP000002296">
    <property type="component" value="Unassembled WGS sequence"/>
</dbReference>
<dbReference type="GO" id="GO:0005874">
    <property type="term" value="C:microtubule"/>
    <property type="evidence" value="ECO:0007669"/>
    <property type="project" value="InterPro"/>
</dbReference>
<dbReference type="GO" id="GO:0003700">
    <property type="term" value="F:DNA-binding transcription factor activity"/>
    <property type="evidence" value="ECO:0007669"/>
    <property type="project" value="InterPro"/>
</dbReference>
<dbReference type="GO" id="GO:0043565">
    <property type="term" value="F:sequence-specific DNA binding"/>
    <property type="evidence" value="ECO:0007669"/>
    <property type="project" value="InterPro"/>
</dbReference>
<dbReference type="GO" id="GO:0019799">
    <property type="term" value="F:tubulin N-acetyltransferase activity"/>
    <property type="evidence" value="ECO:0007669"/>
    <property type="project" value="UniProtKB-UniRule"/>
</dbReference>
<dbReference type="GO" id="GO:0070507">
    <property type="term" value="P:regulation of microtubule cytoskeleton organization"/>
    <property type="evidence" value="ECO:0007669"/>
    <property type="project" value="UniProtKB-UniRule"/>
</dbReference>
<dbReference type="FunFam" id="3.40.630.30:FF:000166">
    <property type="entry name" value="Alpha-tubulin N-acetyltransferase"/>
    <property type="match status" value="1"/>
</dbReference>
<dbReference type="Gene3D" id="3.40.630.30">
    <property type="match status" value="1"/>
</dbReference>
<dbReference type="HAMAP" id="MF_03130">
    <property type="entry name" value="mec17"/>
    <property type="match status" value="1"/>
</dbReference>
<dbReference type="InterPro" id="IPR038746">
    <property type="entry name" value="Atat"/>
</dbReference>
<dbReference type="InterPro" id="IPR007965">
    <property type="entry name" value="GNAT_ATAT"/>
</dbReference>
<dbReference type="InterPro" id="IPR003657">
    <property type="entry name" value="WRKY_dom"/>
</dbReference>
<dbReference type="PANTHER" id="PTHR12327">
    <property type="entry name" value="ALPHA-TUBULIN N-ACETYLTRANSFERASE 1"/>
    <property type="match status" value="1"/>
</dbReference>
<dbReference type="PANTHER" id="PTHR12327:SF0">
    <property type="entry name" value="ALPHA-TUBULIN N-ACETYLTRANSFERASE 1"/>
    <property type="match status" value="1"/>
</dbReference>
<dbReference type="Pfam" id="PF05301">
    <property type="entry name" value="Acetyltransf_16"/>
    <property type="match status" value="1"/>
</dbReference>
<dbReference type="PROSITE" id="PS51730">
    <property type="entry name" value="GNAT_ATAT"/>
    <property type="match status" value="1"/>
</dbReference>
<name>ATAT2_TRYCC</name>
<sequence length="328" mass="36784">MSSTSQVALLPKLSLPDGVTVWDGTALEYERRCNNIDEHAVHLMQTINILGIRSKEAQCLNTVLTSVARLRENRQARVYLLCQDGYGVGILKMGVKKLFVTHPSYSSLVEIDPLCVLDFFVDTSFQRKGFGKTLFDAMLLNEGLNPGEVAIDRPSVKFLAFLRKYYGLVEYTPQSNNFVVFHRYFDKWQPQRGKGHRGGNAVPTRSIVRPQNCLRVYPEYQSTTGPNDNFEEDATHRTPPPPLPPPLVPQGSVNSPGPGKKTAYELQYEEYLREQAYRRRQGGDPRLQPVPNPVSSSEIAAASCGARRRMSPTRSGVQYNIISGTPEH</sequence>
<proteinExistence type="inferred from homology"/>
<reference key="1">
    <citation type="journal article" date="2005" name="Science">
        <title>The genome sequence of Trypanosoma cruzi, etiologic agent of Chagas disease.</title>
        <authorList>
            <person name="El-Sayed N.M.A."/>
            <person name="Myler P.J."/>
            <person name="Bartholomeu D.C."/>
            <person name="Nilsson D."/>
            <person name="Aggarwal G."/>
            <person name="Tran A.-N."/>
            <person name="Ghedin E."/>
            <person name="Worthey E.A."/>
            <person name="Delcher A.L."/>
            <person name="Blandin G."/>
            <person name="Westenberger S.J."/>
            <person name="Caler E."/>
            <person name="Cerqueira G.C."/>
            <person name="Branche C."/>
            <person name="Haas B."/>
            <person name="Anupama A."/>
            <person name="Arner E."/>
            <person name="Aslund L."/>
            <person name="Attipoe P."/>
            <person name="Bontempi E."/>
            <person name="Bringaud F."/>
            <person name="Burton P."/>
            <person name="Cadag E."/>
            <person name="Campbell D.A."/>
            <person name="Carrington M."/>
            <person name="Crabtree J."/>
            <person name="Darban H."/>
            <person name="da Silveira J.F."/>
            <person name="de Jong P."/>
            <person name="Edwards K."/>
            <person name="Englund P.T."/>
            <person name="Fazelina G."/>
            <person name="Feldblyum T."/>
            <person name="Ferella M."/>
            <person name="Frasch A.C."/>
            <person name="Gull K."/>
            <person name="Horn D."/>
            <person name="Hou L."/>
            <person name="Huang Y."/>
            <person name="Kindlund E."/>
            <person name="Klingbeil M."/>
            <person name="Kluge S."/>
            <person name="Koo H."/>
            <person name="Lacerda D."/>
            <person name="Levin M.J."/>
            <person name="Lorenzi H."/>
            <person name="Louie T."/>
            <person name="Machado C.R."/>
            <person name="McCulloch R."/>
            <person name="McKenna A."/>
            <person name="Mizuno Y."/>
            <person name="Mottram J.C."/>
            <person name="Nelson S."/>
            <person name="Ochaya S."/>
            <person name="Osoegawa K."/>
            <person name="Pai G."/>
            <person name="Parsons M."/>
            <person name="Pentony M."/>
            <person name="Pettersson U."/>
            <person name="Pop M."/>
            <person name="Ramirez J.L."/>
            <person name="Rinta J."/>
            <person name="Robertson L."/>
            <person name="Salzberg S.L."/>
            <person name="Sanchez D.O."/>
            <person name="Seyler A."/>
            <person name="Sharma R."/>
            <person name="Shetty J."/>
            <person name="Simpson A.J."/>
            <person name="Sisk E."/>
            <person name="Tammi M.T."/>
            <person name="Tarleton R."/>
            <person name="Teixeira S."/>
            <person name="Van Aken S."/>
            <person name="Vogt C."/>
            <person name="Ward P.N."/>
            <person name="Wickstead B."/>
            <person name="Wortman J."/>
            <person name="White O."/>
            <person name="Fraser C.M."/>
            <person name="Stuart K.D."/>
            <person name="Andersson B."/>
        </authorList>
    </citation>
    <scope>NUCLEOTIDE SEQUENCE [LARGE SCALE GENOMIC DNA]</scope>
    <source>
        <strain>CL Brener</strain>
    </source>
</reference>
<organism>
    <name type="scientific">Trypanosoma cruzi (strain CL Brener)</name>
    <dbReference type="NCBI Taxonomy" id="353153"/>
    <lineage>
        <taxon>Eukaryota</taxon>
        <taxon>Discoba</taxon>
        <taxon>Euglenozoa</taxon>
        <taxon>Kinetoplastea</taxon>
        <taxon>Metakinetoplastina</taxon>
        <taxon>Trypanosomatida</taxon>
        <taxon>Trypanosomatidae</taxon>
        <taxon>Trypanosoma</taxon>
        <taxon>Schizotrypanum</taxon>
    </lineage>
</organism>
<evidence type="ECO:0000255" key="1">
    <source>
        <dbReference type="HAMAP-Rule" id="MF_03130"/>
    </source>
</evidence>
<evidence type="ECO:0000256" key="2">
    <source>
        <dbReference type="SAM" id="MobiDB-lite"/>
    </source>
</evidence>
<keyword id="KW-0012">Acyltransferase</keyword>
<keyword id="KW-1185">Reference proteome</keyword>
<keyword id="KW-0808">Transferase</keyword>